<comment type="similarity">
    <text evidence="1">To B.subtilis YqbH.</text>
</comment>
<sequence>MSYRQMLIHRCDIYHEAAQAPSAGRFGIPADRLQPVISYPDTPDEQDVPCYFTEKTQQLIQEEPDQTVYHSFLVHFPLSADIRVNDKIIWENHKYILKLPKRIRHHHWEVVAVRDESL</sequence>
<evidence type="ECO:0000305" key="1"/>
<evidence type="ECO:0007829" key="2">
    <source>
        <dbReference type="PDB" id="3F3B"/>
    </source>
</evidence>
<protein>
    <recommendedName>
        <fullName>Phage-like element PBSX protein XkdH</fullName>
    </recommendedName>
</protein>
<name>XKDH_BACSU</name>
<dbReference type="EMBL" id="Z70177">
    <property type="protein sequence ID" value="CAA94063.1"/>
    <property type="molecule type" value="Genomic_DNA"/>
</dbReference>
<dbReference type="EMBL" id="AL009126">
    <property type="protein sequence ID" value="CAB13119.1"/>
    <property type="molecule type" value="Genomic_DNA"/>
</dbReference>
<dbReference type="PIR" id="H69731">
    <property type="entry name" value="H69731"/>
</dbReference>
<dbReference type="RefSeq" id="NP_389144.1">
    <property type="nucleotide sequence ID" value="NC_000964.3"/>
</dbReference>
<dbReference type="RefSeq" id="WP_009967053.1">
    <property type="nucleotide sequence ID" value="NZ_OZ025638.1"/>
</dbReference>
<dbReference type="PDB" id="3F3B">
    <property type="method" value="X-ray"/>
    <property type="resolution" value="2.50 A"/>
    <property type="chains" value="A=1-118"/>
</dbReference>
<dbReference type="PDBsum" id="3F3B"/>
<dbReference type="SMR" id="P54328"/>
<dbReference type="FunCoup" id="P54328">
    <property type="interactions" value="55"/>
</dbReference>
<dbReference type="STRING" id="224308.BSU12620"/>
<dbReference type="PaxDb" id="224308-BSU12620"/>
<dbReference type="EnsemblBacteria" id="CAB13119">
    <property type="protein sequence ID" value="CAB13119"/>
    <property type="gene ID" value="BSU_12620"/>
</dbReference>
<dbReference type="GeneID" id="936470"/>
<dbReference type="KEGG" id="bsu:BSU12620"/>
<dbReference type="PATRIC" id="fig|224308.179.peg.1367"/>
<dbReference type="eggNOG" id="ENOG5033B8A">
    <property type="taxonomic scope" value="Bacteria"/>
</dbReference>
<dbReference type="InParanoid" id="P54328"/>
<dbReference type="OrthoDB" id="2055104at2"/>
<dbReference type="BioCyc" id="BSUB:BSU12620-MONOMER"/>
<dbReference type="EvolutionaryTrace" id="P54328"/>
<dbReference type="Proteomes" id="UP000001570">
    <property type="component" value="Chromosome"/>
</dbReference>
<dbReference type="Gene3D" id="2.40.10.370">
    <property type="entry name" value="Protein of unknown function DUF3599"/>
    <property type="match status" value="1"/>
</dbReference>
<dbReference type="InterPro" id="IPR024556">
    <property type="entry name" value="DUF3599"/>
</dbReference>
<dbReference type="InterPro" id="IPR038667">
    <property type="entry name" value="XkdH-like_sf"/>
</dbReference>
<dbReference type="Pfam" id="PF12206">
    <property type="entry name" value="DUF3599"/>
    <property type="match status" value="1"/>
</dbReference>
<accession>P54328</accession>
<organism>
    <name type="scientific">Bacillus subtilis (strain 168)</name>
    <dbReference type="NCBI Taxonomy" id="224308"/>
    <lineage>
        <taxon>Bacteria</taxon>
        <taxon>Bacillati</taxon>
        <taxon>Bacillota</taxon>
        <taxon>Bacilli</taxon>
        <taxon>Bacillales</taxon>
        <taxon>Bacillaceae</taxon>
        <taxon>Bacillus</taxon>
    </lineage>
</organism>
<feature type="chain" id="PRO_0000066022" description="Phage-like element PBSX protein XkdH">
    <location>
        <begin position="1"/>
        <end position="118"/>
    </location>
</feature>
<feature type="strand" evidence="2">
    <location>
        <begin position="9"/>
        <end position="14"/>
    </location>
</feature>
<feature type="strand" evidence="2">
    <location>
        <begin position="17"/>
        <end position="19"/>
    </location>
</feature>
<feature type="turn" evidence="2">
    <location>
        <begin position="25"/>
        <end position="27"/>
    </location>
</feature>
<feature type="strand" evidence="2">
    <location>
        <begin position="36"/>
        <end position="38"/>
    </location>
</feature>
<feature type="strand" evidence="2">
    <location>
        <begin position="44"/>
        <end position="61"/>
    </location>
</feature>
<feature type="turn" evidence="2">
    <location>
        <begin position="62"/>
        <end position="65"/>
    </location>
</feature>
<feature type="strand" evidence="2">
    <location>
        <begin position="66"/>
        <end position="77"/>
    </location>
</feature>
<feature type="strand" evidence="2">
    <location>
        <begin position="87"/>
        <end position="90"/>
    </location>
</feature>
<feature type="strand" evidence="2">
    <location>
        <begin position="93"/>
        <end position="97"/>
    </location>
</feature>
<feature type="strand" evidence="2">
    <location>
        <begin position="102"/>
        <end position="104"/>
    </location>
</feature>
<feature type="strand" evidence="2">
    <location>
        <begin position="107"/>
        <end position="114"/>
    </location>
</feature>
<feature type="helix" evidence="2">
    <location>
        <begin position="115"/>
        <end position="117"/>
    </location>
</feature>
<keyword id="KW-0002">3D-structure</keyword>
<keyword id="KW-1185">Reference proteome</keyword>
<proteinExistence type="evidence at protein level"/>
<reference key="1">
    <citation type="submission" date="1996-03" db="EMBL/GenBank/DDBJ databases">
        <authorList>
            <person name="Krogh S."/>
            <person name="O'Reilly M."/>
            <person name="Nolan N."/>
            <person name="Devine K.M."/>
        </authorList>
    </citation>
    <scope>NUCLEOTIDE SEQUENCE [GENOMIC DNA]</scope>
    <source>
        <strain>168</strain>
    </source>
</reference>
<reference key="2">
    <citation type="journal article" date="1997" name="Nature">
        <title>The complete genome sequence of the Gram-positive bacterium Bacillus subtilis.</title>
        <authorList>
            <person name="Kunst F."/>
            <person name="Ogasawara N."/>
            <person name="Moszer I."/>
            <person name="Albertini A.M."/>
            <person name="Alloni G."/>
            <person name="Azevedo V."/>
            <person name="Bertero M.G."/>
            <person name="Bessieres P."/>
            <person name="Bolotin A."/>
            <person name="Borchert S."/>
            <person name="Borriss R."/>
            <person name="Boursier L."/>
            <person name="Brans A."/>
            <person name="Braun M."/>
            <person name="Brignell S.C."/>
            <person name="Bron S."/>
            <person name="Brouillet S."/>
            <person name="Bruschi C.V."/>
            <person name="Caldwell B."/>
            <person name="Capuano V."/>
            <person name="Carter N.M."/>
            <person name="Choi S.-K."/>
            <person name="Codani J.-J."/>
            <person name="Connerton I.F."/>
            <person name="Cummings N.J."/>
            <person name="Daniel R.A."/>
            <person name="Denizot F."/>
            <person name="Devine K.M."/>
            <person name="Duesterhoeft A."/>
            <person name="Ehrlich S.D."/>
            <person name="Emmerson P.T."/>
            <person name="Entian K.-D."/>
            <person name="Errington J."/>
            <person name="Fabret C."/>
            <person name="Ferrari E."/>
            <person name="Foulger D."/>
            <person name="Fritz C."/>
            <person name="Fujita M."/>
            <person name="Fujita Y."/>
            <person name="Fuma S."/>
            <person name="Galizzi A."/>
            <person name="Galleron N."/>
            <person name="Ghim S.-Y."/>
            <person name="Glaser P."/>
            <person name="Goffeau A."/>
            <person name="Golightly E.J."/>
            <person name="Grandi G."/>
            <person name="Guiseppi G."/>
            <person name="Guy B.J."/>
            <person name="Haga K."/>
            <person name="Haiech J."/>
            <person name="Harwood C.R."/>
            <person name="Henaut A."/>
            <person name="Hilbert H."/>
            <person name="Holsappel S."/>
            <person name="Hosono S."/>
            <person name="Hullo M.-F."/>
            <person name="Itaya M."/>
            <person name="Jones L.-M."/>
            <person name="Joris B."/>
            <person name="Karamata D."/>
            <person name="Kasahara Y."/>
            <person name="Klaerr-Blanchard M."/>
            <person name="Klein C."/>
            <person name="Kobayashi Y."/>
            <person name="Koetter P."/>
            <person name="Koningstein G."/>
            <person name="Krogh S."/>
            <person name="Kumano M."/>
            <person name="Kurita K."/>
            <person name="Lapidus A."/>
            <person name="Lardinois S."/>
            <person name="Lauber J."/>
            <person name="Lazarevic V."/>
            <person name="Lee S.-M."/>
            <person name="Levine A."/>
            <person name="Liu H."/>
            <person name="Masuda S."/>
            <person name="Mauel C."/>
            <person name="Medigue C."/>
            <person name="Medina N."/>
            <person name="Mellado R.P."/>
            <person name="Mizuno M."/>
            <person name="Moestl D."/>
            <person name="Nakai S."/>
            <person name="Noback M."/>
            <person name="Noone D."/>
            <person name="O'Reilly M."/>
            <person name="Ogawa K."/>
            <person name="Ogiwara A."/>
            <person name="Oudega B."/>
            <person name="Park S.-H."/>
            <person name="Parro V."/>
            <person name="Pohl T.M."/>
            <person name="Portetelle D."/>
            <person name="Porwollik S."/>
            <person name="Prescott A.M."/>
            <person name="Presecan E."/>
            <person name="Pujic P."/>
            <person name="Purnelle B."/>
            <person name="Rapoport G."/>
            <person name="Rey M."/>
            <person name="Reynolds S."/>
            <person name="Rieger M."/>
            <person name="Rivolta C."/>
            <person name="Rocha E."/>
            <person name="Roche B."/>
            <person name="Rose M."/>
            <person name="Sadaie Y."/>
            <person name="Sato T."/>
            <person name="Scanlan E."/>
            <person name="Schleich S."/>
            <person name="Schroeter R."/>
            <person name="Scoffone F."/>
            <person name="Sekiguchi J."/>
            <person name="Sekowska A."/>
            <person name="Seror S.J."/>
            <person name="Serror P."/>
            <person name="Shin B.-S."/>
            <person name="Soldo B."/>
            <person name="Sorokin A."/>
            <person name="Tacconi E."/>
            <person name="Takagi T."/>
            <person name="Takahashi H."/>
            <person name="Takemaru K."/>
            <person name="Takeuchi M."/>
            <person name="Tamakoshi A."/>
            <person name="Tanaka T."/>
            <person name="Terpstra P."/>
            <person name="Tognoni A."/>
            <person name="Tosato V."/>
            <person name="Uchiyama S."/>
            <person name="Vandenbol M."/>
            <person name="Vannier F."/>
            <person name="Vassarotti A."/>
            <person name="Viari A."/>
            <person name="Wambutt R."/>
            <person name="Wedler E."/>
            <person name="Wedler H."/>
            <person name="Weitzenegger T."/>
            <person name="Winters P."/>
            <person name="Wipat A."/>
            <person name="Yamamoto H."/>
            <person name="Yamane K."/>
            <person name="Yasumoto K."/>
            <person name="Yata K."/>
            <person name="Yoshida K."/>
            <person name="Yoshikawa H.-F."/>
            <person name="Zumstein E."/>
            <person name="Yoshikawa H."/>
            <person name="Danchin A."/>
        </authorList>
    </citation>
    <scope>NUCLEOTIDE SEQUENCE [LARGE SCALE GENOMIC DNA]</scope>
    <source>
        <strain>168</strain>
    </source>
</reference>
<gene>
    <name type="primary">xkdH</name>
    <name type="ordered locus">BSU12620</name>
</gene>